<organism>
    <name type="scientific">Saccharophagus degradans (strain 2-40 / ATCC 43961 / DSM 17024)</name>
    <dbReference type="NCBI Taxonomy" id="203122"/>
    <lineage>
        <taxon>Bacteria</taxon>
        <taxon>Pseudomonadati</taxon>
        <taxon>Pseudomonadota</taxon>
        <taxon>Gammaproteobacteria</taxon>
        <taxon>Cellvibrionales</taxon>
        <taxon>Cellvibrionaceae</taxon>
        <taxon>Saccharophagus</taxon>
    </lineage>
</organism>
<reference key="1">
    <citation type="journal article" date="2008" name="PLoS Genet.">
        <title>Complete genome sequence of the complex carbohydrate-degrading marine bacterium, Saccharophagus degradans strain 2-40 T.</title>
        <authorList>
            <person name="Weiner R.M."/>
            <person name="Taylor L.E. II"/>
            <person name="Henrissat B."/>
            <person name="Hauser L."/>
            <person name="Land M."/>
            <person name="Coutinho P.M."/>
            <person name="Rancurel C."/>
            <person name="Saunders E.H."/>
            <person name="Longmire A.G."/>
            <person name="Zhang H."/>
            <person name="Bayer E.A."/>
            <person name="Gilbert H.J."/>
            <person name="Larimer F."/>
            <person name="Zhulin I.B."/>
            <person name="Ekborg N.A."/>
            <person name="Lamed R."/>
            <person name="Richardson P.M."/>
            <person name="Borovok I."/>
            <person name="Hutcheson S."/>
        </authorList>
    </citation>
    <scope>NUCLEOTIDE SEQUENCE [LARGE SCALE GENOMIC DNA]</scope>
    <source>
        <strain>2-40 / ATCC 43961 / DSM 17024</strain>
    </source>
</reference>
<comment type="function">
    <text evidence="1">Required for the formation of a threonylcarbamoyl group on adenosine at position 37 (t(6)A37) in tRNAs that read codons beginning with adenine. Is involved in the transfer of the threonylcarbamoyl moiety of threonylcarbamoyl-AMP (TC-AMP) to the N6 group of A37, together with TsaE and TsaB. TsaD likely plays a direct catalytic role in this reaction.</text>
</comment>
<comment type="catalytic activity">
    <reaction evidence="1">
        <text>L-threonylcarbamoyladenylate + adenosine(37) in tRNA = N(6)-L-threonylcarbamoyladenosine(37) in tRNA + AMP + H(+)</text>
        <dbReference type="Rhea" id="RHEA:37059"/>
        <dbReference type="Rhea" id="RHEA-COMP:10162"/>
        <dbReference type="Rhea" id="RHEA-COMP:10163"/>
        <dbReference type="ChEBI" id="CHEBI:15378"/>
        <dbReference type="ChEBI" id="CHEBI:73682"/>
        <dbReference type="ChEBI" id="CHEBI:74411"/>
        <dbReference type="ChEBI" id="CHEBI:74418"/>
        <dbReference type="ChEBI" id="CHEBI:456215"/>
        <dbReference type="EC" id="2.3.1.234"/>
    </reaction>
</comment>
<comment type="cofactor">
    <cofactor evidence="1">
        <name>Fe(2+)</name>
        <dbReference type="ChEBI" id="CHEBI:29033"/>
    </cofactor>
    <text evidence="1">Binds 1 Fe(2+) ion per subunit.</text>
</comment>
<comment type="subcellular location">
    <subcellularLocation>
        <location evidence="1">Cytoplasm</location>
    </subcellularLocation>
</comment>
<comment type="similarity">
    <text evidence="1">Belongs to the KAE1 / TsaD family.</text>
</comment>
<dbReference type="EC" id="2.3.1.234" evidence="1"/>
<dbReference type="EMBL" id="CP000282">
    <property type="protein sequence ID" value="ABD79982.1"/>
    <property type="molecule type" value="Genomic_DNA"/>
</dbReference>
<dbReference type="RefSeq" id="WP_011467203.1">
    <property type="nucleotide sequence ID" value="NC_007912.1"/>
</dbReference>
<dbReference type="SMR" id="Q21MU7"/>
<dbReference type="STRING" id="203122.Sde_0720"/>
<dbReference type="GeneID" id="98612405"/>
<dbReference type="KEGG" id="sde:Sde_0720"/>
<dbReference type="eggNOG" id="COG0533">
    <property type="taxonomic scope" value="Bacteria"/>
</dbReference>
<dbReference type="HOGENOM" id="CLU_023208_0_2_6"/>
<dbReference type="OrthoDB" id="9806197at2"/>
<dbReference type="Proteomes" id="UP000001947">
    <property type="component" value="Chromosome"/>
</dbReference>
<dbReference type="GO" id="GO:0005737">
    <property type="term" value="C:cytoplasm"/>
    <property type="evidence" value="ECO:0007669"/>
    <property type="project" value="UniProtKB-SubCell"/>
</dbReference>
<dbReference type="GO" id="GO:0005506">
    <property type="term" value="F:iron ion binding"/>
    <property type="evidence" value="ECO:0007669"/>
    <property type="project" value="UniProtKB-UniRule"/>
</dbReference>
<dbReference type="GO" id="GO:0061711">
    <property type="term" value="F:N(6)-L-threonylcarbamoyladenine synthase activity"/>
    <property type="evidence" value="ECO:0007669"/>
    <property type="project" value="UniProtKB-EC"/>
</dbReference>
<dbReference type="GO" id="GO:0002949">
    <property type="term" value="P:tRNA threonylcarbamoyladenosine modification"/>
    <property type="evidence" value="ECO:0007669"/>
    <property type="project" value="UniProtKB-UniRule"/>
</dbReference>
<dbReference type="CDD" id="cd24133">
    <property type="entry name" value="ASKHA_NBD_TsaD_bac"/>
    <property type="match status" value="1"/>
</dbReference>
<dbReference type="FunFam" id="3.30.420.40:FF:000031">
    <property type="entry name" value="tRNA N6-adenosine threonylcarbamoyltransferase"/>
    <property type="match status" value="1"/>
</dbReference>
<dbReference type="Gene3D" id="3.30.420.40">
    <property type="match status" value="2"/>
</dbReference>
<dbReference type="HAMAP" id="MF_01445">
    <property type="entry name" value="TsaD"/>
    <property type="match status" value="1"/>
</dbReference>
<dbReference type="InterPro" id="IPR043129">
    <property type="entry name" value="ATPase_NBD"/>
</dbReference>
<dbReference type="InterPro" id="IPR000905">
    <property type="entry name" value="Gcp-like_dom"/>
</dbReference>
<dbReference type="InterPro" id="IPR017861">
    <property type="entry name" value="KAE1/TsaD"/>
</dbReference>
<dbReference type="InterPro" id="IPR017860">
    <property type="entry name" value="Peptidase_M22_CS"/>
</dbReference>
<dbReference type="InterPro" id="IPR022450">
    <property type="entry name" value="TsaD"/>
</dbReference>
<dbReference type="NCBIfam" id="TIGR00329">
    <property type="entry name" value="gcp_kae1"/>
    <property type="match status" value="1"/>
</dbReference>
<dbReference type="NCBIfam" id="TIGR03723">
    <property type="entry name" value="T6A_TsaD_YgjD"/>
    <property type="match status" value="1"/>
</dbReference>
<dbReference type="PANTHER" id="PTHR11735">
    <property type="entry name" value="TRNA N6-ADENOSINE THREONYLCARBAMOYLTRANSFERASE"/>
    <property type="match status" value="1"/>
</dbReference>
<dbReference type="PANTHER" id="PTHR11735:SF6">
    <property type="entry name" value="TRNA N6-ADENOSINE THREONYLCARBAMOYLTRANSFERASE, MITOCHONDRIAL"/>
    <property type="match status" value="1"/>
</dbReference>
<dbReference type="Pfam" id="PF00814">
    <property type="entry name" value="TsaD"/>
    <property type="match status" value="1"/>
</dbReference>
<dbReference type="PRINTS" id="PR00789">
    <property type="entry name" value="OSIALOPTASE"/>
</dbReference>
<dbReference type="SUPFAM" id="SSF53067">
    <property type="entry name" value="Actin-like ATPase domain"/>
    <property type="match status" value="2"/>
</dbReference>
<dbReference type="PROSITE" id="PS01016">
    <property type="entry name" value="GLYCOPROTEASE"/>
    <property type="match status" value="1"/>
</dbReference>
<keyword id="KW-0012">Acyltransferase</keyword>
<keyword id="KW-0963">Cytoplasm</keyword>
<keyword id="KW-0408">Iron</keyword>
<keyword id="KW-0479">Metal-binding</keyword>
<keyword id="KW-1185">Reference proteome</keyword>
<keyword id="KW-0808">Transferase</keyword>
<keyword id="KW-0819">tRNA processing</keyword>
<proteinExistence type="inferred from homology"/>
<protein>
    <recommendedName>
        <fullName evidence="1">tRNA N6-adenosine threonylcarbamoyltransferase</fullName>
        <ecNumber evidence="1">2.3.1.234</ecNumber>
    </recommendedName>
    <alternativeName>
        <fullName evidence="1">N6-L-threonylcarbamoyladenine synthase</fullName>
        <shortName evidence="1">t(6)A synthase</shortName>
    </alternativeName>
    <alternativeName>
        <fullName evidence="1">t(6)A37 threonylcarbamoyladenosine biosynthesis protein TsaD</fullName>
    </alternativeName>
    <alternativeName>
        <fullName evidence="1">tRNA threonylcarbamoyladenosine biosynthesis protein TsaD</fullName>
    </alternativeName>
</protein>
<sequence length="341" mass="36303">MRVLGIETSCDETGVAIYDSEAGLLGHTLYSQVAVHAEYGGVVPELASRDHVRKLLPLVDGLLDNTDSRNKIDAIAYTSGPGLIGALLVGACFGRGLAMAWGCPAIGVHHMEGHLLAPMLEDAPPAFPFVALLVSGGHTQLVEVQGIGKYVLLGESLDDAAGEAFDKAAKMMDLDYPGGPNIAKLATKGDVSRFKFPRPMTDRPGLDFSFSGLKTFTLNTVAKYADETGLPDDQTCADIACAFQEAVVDTLVIKCRRALQQTKLNTLVIAGGVSANVRLRERLEAALAKINSQVYYARPEFCTDNGAMIAYAGCQRLLAGQVEPLAINVSPRWALDTLPAI</sequence>
<evidence type="ECO:0000255" key="1">
    <source>
        <dbReference type="HAMAP-Rule" id="MF_01445"/>
    </source>
</evidence>
<feature type="chain" id="PRO_0000303529" description="tRNA N6-adenosine threonylcarbamoyltransferase">
    <location>
        <begin position="1"/>
        <end position="341"/>
    </location>
</feature>
<feature type="binding site" evidence="1">
    <location>
        <position position="110"/>
    </location>
    <ligand>
        <name>Fe cation</name>
        <dbReference type="ChEBI" id="CHEBI:24875"/>
    </ligand>
</feature>
<feature type="binding site" evidence="1">
    <location>
        <position position="114"/>
    </location>
    <ligand>
        <name>Fe cation</name>
        <dbReference type="ChEBI" id="CHEBI:24875"/>
    </ligand>
</feature>
<feature type="binding site" evidence="1">
    <location>
        <begin position="133"/>
        <end position="137"/>
    </location>
    <ligand>
        <name>substrate</name>
    </ligand>
</feature>
<feature type="binding site" evidence="1">
    <location>
        <position position="166"/>
    </location>
    <ligand>
        <name>substrate</name>
    </ligand>
</feature>
<feature type="binding site" evidence="1">
    <location>
        <position position="179"/>
    </location>
    <ligand>
        <name>substrate</name>
    </ligand>
</feature>
<feature type="binding site" evidence="1">
    <location>
        <position position="276"/>
    </location>
    <ligand>
        <name>substrate</name>
    </ligand>
</feature>
<feature type="binding site" evidence="1">
    <location>
        <position position="304"/>
    </location>
    <ligand>
        <name>Fe cation</name>
        <dbReference type="ChEBI" id="CHEBI:24875"/>
    </ligand>
</feature>
<name>TSAD_SACD2</name>
<gene>
    <name evidence="1" type="primary">tsaD</name>
    <name type="synonym">gcp</name>
    <name type="ordered locus">Sde_0720</name>
</gene>
<accession>Q21MU7</accession>